<evidence type="ECO:0000250" key="1">
    <source>
        <dbReference type="UniProtKB" id="P38244"/>
    </source>
</evidence>
<evidence type="ECO:0000250" key="2">
    <source>
        <dbReference type="UniProtKB" id="P80561"/>
    </source>
</evidence>
<evidence type="ECO:0000255" key="3"/>
<evidence type="ECO:0000255" key="4">
    <source>
        <dbReference type="PROSITE-ProRule" id="PRU00498"/>
    </source>
</evidence>
<evidence type="ECO:0000256" key="5">
    <source>
        <dbReference type="SAM" id="MobiDB-lite"/>
    </source>
</evidence>
<evidence type="ECO:0000305" key="6"/>
<reference key="1">
    <citation type="journal article" date="2004" name="Nature">
        <title>Genome evolution in yeasts.</title>
        <authorList>
            <person name="Dujon B."/>
            <person name="Sherman D."/>
            <person name="Fischer G."/>
            <person name="Durrens P."/>
            <person name="Casaregola S."/>
            <person name="Lafontaine I."/>
            <person name="de Montigny J."/>
            <person name="Marck C."/>
            <person name="Neuveglise C."/>
            <person name="Talla E."/>
            <person name="Goffard N."/>
            <person name="Frangeul L."/>
            <person name="Aigle M."/>
            <person name="Anthouard V."/>
            <person name="Babour A."/>
            <person name="Barbe V."/>
            <person name="Barnay S."/>
            <person name="Blanchin S."/>
            <person name="Beckerich J.-M."/>
            <person name="Beyne E."/>
            <person name="Bleykasten C."/>
            <person name="Boisrame A."/>
            <person name="Boyer J."/>
            <person name="Cattolico L."/>
            <person name="Confanioleri F."/>
            <person name="de Daruvar A."/>
            <person name="Despons L."/>
            <person name="Fabre E."/>
            <person name="Fairhead C."/>
            <person name="Ferry-Dumazet H."/>
            <person name="Groppi A."/>
            <person name="Hantraye F."/>
            <person name="Hennequin C."/>
            <person name="Jauniaux N."/>
            <person name="Joyet P."/>
            <person name="Kachouri R."/>
            <person name="Kerrest A."/>
            <person name="Koszul R."/>
            <person name="Lemaire M."/>
            <person name="Lesur I."/>
            <person name="Ma L."/>
            <person name="Muller H."/>
            <person name="Nicaud J.-M."/>
            <person name="Nikolski M."/>
            <person name="Oztas S."/>
            <person name="Ozier-Kalogeropoulos O."/>
            <person name="Pellenz S."/>
            <person name="Potier S."/>
            <person name="Richard G.-F."/>
            <person name="Straub M.-L."/>
            <person name="Suleau A."/>
            <person name="Swennen D."/>
            <person name="Tekaia F."/>
            <person name="Wesolowski-Louvel M."/>
            <person name="Westhof E."/>
            <person name="Wirth B."/>
            <person name="Zeniou-Meyer M."/>
            <person name="Zivanovic Y."/>
            <person name="Bolotin-Fukuhara M."/>
            <person name="Thierry A."/>
            <person name="Bouchier C."/>
            <person name="Caudron B."/>
            <person name="Scarpelli C."/>
            <person name="Gaillardin C."/>
            <person name="Weissenbach J."/>
            <person name="Wincker P."/>
            <person name="Souciet J.-L."/>
        </authorList>
    </citation>
    <scope>NUCLEOTIDE SEQUENCE [LARGE SCALE GENOMIC DNA]</scope>
    <source>
        <strain>CLIB 122 / E 150</strain>
    </source>
</reference>
<keyword id="KW-0325">Glycoprotein</keyword>
<keyword id="KW-0378">Hydrolase</keyword>
<keyword id="KW-0472">Membrane</keyword>
<keyword id="KW-0479">Metal-binding</keyword>
<keyword id="KW-0482">Metalloprotease</keyword>
<keyword id="KW-0645">Protease</keyword>
<keyword id="KW-1185">Reference proteome</keyword>
<keyword id="KW-0812">Transmembrane</keyword>
<keyword id="KW-1133">Transmembrane helix</keyword>
<keyword id="KW-0926">Vacuole</keyword>
<keyword id="KW-0862">Zinc</keyword>
<sequence>MDRQSLRTTLRAMDASNENGSAKGAKKTTIGSFVRWTFGFNSVPLTTLVTITTVLLGLLVYVSTSVNPPDVTEAQKPLLNYAWAQLGEISRYPHPYFSHDNDRVRQHILKEVYTLAGREHFEGAQIEVDDSQTDIFIQKEDVFDKSAPPGKLTYFEGNNVVVRLSSKNSDKSLGAILLSAHFDSVPSSFGVTDDGAGIATMLAVLKHALAQNEGPKRDIIFNFNNNEEFGLLGAEAFMHHPWAQNVSAFINLEGTGAGGKAILFRASDYGVASHYSAAEMPFASSVYQEGFSNGFIHSQTDYKVYTEGGLRGLDIAFYKPRALYHTRRDNIAETTKNALNHMLVNTIDVTQSMTEADSFDHADQPAVFSDIGGYLFIILPLQYIFVISCLTLAVGPIFVGFLFLLVLRKQINAGTSETILGGWLRSIVSVLVSVVATYFVVETLHLGNELYVVRSFYTPLFAGLGTFIFVNYVLLGFFHFVRPVCDQKLIILLELSVVLWVLLLLSVIHEATHKATGEYHFLILYIVVATASILGLFGHLVTSTETSTFVEGPEDEEDTVDASEATETSPLLPEASPDNAAPSIHGAVDPENQQEDKTLQKIAVSMGYDWSIQFLLVVPITFFVTFGLAASLLDGLHQTPLESEKSADFVYTTITAMSVLVGITFLPFVHKLQVFVPIVVVGVAVTASFVHILSPPFSSNAPAKMRFVQNINLDEGTSYANVLGRQDVLQEVLEYIPSTDTFKPNCSSRGDGVEICNYIAPRPWLIDGEKVSSDGDFAGLPTNLLDVKVVPVNETSSGPFDRFDGRFKISALNNRGCVLRFNTTRFKSGDVETGVSPVKMVTLRHNRVGKTGITTGSGSRFSMFGWTRDPKTGKDEFRSFMHGVDDVTLHKLDWEDPEYDIQLSWIPRWYEVGDPEDEGNEALKNRLGVTVTCSWAEYLDPSSIVDEQGRRRTMDKIPAFTELNNFSPAWSIWSNQGRGLVEVSKYVEL</sequence>
<comment type="function">
    <text evidence="1">May be involved in vacuolar sorting and osmoregulation.</text>
</comment>
<comment type="cofactor">
    <cofactor evidence="2">
        <name>Zn(2+)</name>
        <dbReference type="ChEBI" id="CHEBI:29105"/>
    </cofactor>
    <text evidence="2">Binds 2 Zn(2+) ions per subunit.</text>
</comment>
<comment type="subcellular location">
    <subcellularLocation>
        <location evidence="1">Vacuole membrane</location>
        <topology evidence="3">Multi-pass membrane protein</topology>
    </subcellularLocation>
</comment>
<comment type="similarity">
    <text evidence="6">Belongs to the peptidase M28 family.</text>
</comment>
<feature type="chain" id="PRO_0000411749" description="Vacuolar membrane protease">
    <location>
        <begin position="1"/>
        <end position="989"/>
    </location>
</feature>
<feature type="topological domain" description="Cytoplasmic" evidence="1">
    <location>
        <begin position="1"/>
        <end position="41"/>
    </location>
</feature>
<feature type="transmembrane region" description="Helical; Name=1" evidence="3">
    <location>
        <begin position="42"/>
        <end position="62"/>
    </location>
</feature>
<feature type="topological domain" description="Vacuolar" evidence="1">
    <location>
        <begin position="63"/>
        <end position="383"/>
    </location>
</feature>
<feature type="transmembrane region" description="Helical; Name=2" evidence="3">
    <location>
        <begin position="384"/>
        <end position="404"/>
    </location>
</feature>
<feature type="topological domain" description="Cytoplasmic" evidence="1">
    <location>
        <begin position="405"/>
        <end position="426"/>
    </location>
</feature>
<feature type="transmembrane region" description="Helical; Name=3" evidence="3">
    <location>
        <begin position="427"/>
        <end position="447"/>
    </location>
</feature>
<feature type="topological domain" description="Vacuolar" evidence="1">
    <location>
        <begin position="448"/>
        <end position="460"/>
    </location>
</feature>
<feature type="transmembrane region" description="Helical; Name=4" evidence="3">
    <location>
        <begin position="461"/>
        <end position="481"/>
    </location>
</feature>
<feature type="topological domain" description="Cytoplasmic" evidence="1">
    <location>
        <begin position="482"/>
        <end position="488"/>
    </location>
</feature>
<feature type="transmembrane region" description="Helical; Name=5" evidence="3">
    <location>
        <begin position="489"/>
        <end position="509"/>
    </location>
</feature>
<feature type="topological domain" description="Vacuolar" evidence="1">
    <location>
        <begin position="510"/>
        <end position="520"/>
    </location>
</feature>
<feature type="transmembrane region" description="Helical; Name=6" evidence="3">
    <location>
        <begin position="521"/>
        <end position="541"/>
    </location>
</feature>
<feature type="topological domain" description="Cytoplasmic" evidence="1">
    <location>
        <begin position="542"/>
        <end position="611"/>
    </location>
</feature>
<feature type="transmembrane region" description="Helical; Name=7" evidence="3">
    <location>
        <begin position="612"/>
        <end position="632"/>
    </location>
</feature>
<feature type="topological domain" description="Vacuolar" evidence="1">
    <location>
        <begin position="633"/>
        <end position="648"/>
    </location>
</feature>
<feature type="transmembrane region" description="Helical; Name=8" evidence="3">
    <location>
        <begin position="649"/>
        <end position="669"/>
    </location>
</feature>
<feature type="topological domain" description="Cytoplasmic" evidence="1">
    <location>
        <begin position="670"/>
        <end position="673"/>
    </location>
</feature>
<feature type="transmembrane region" description="Helical; Name=9" evidence="3">
    <location>
        <begin position="674"/>
        <end position="694"/>
    </location>
</feature>
<feature type="topological domain" description="Vacuolar" evidence="1">
    <location>
        <begin position="695"/>
        <end position="989"/>
    </location>
</feature>
<feature type="region of interest" description="Disordered" evidence="5">
    <location>
        <begin position="1"/>
        <end position="25"/>
    </location>
</feature>
<feature type="region of interest" description="Disordered" evidence="5">
    <location>
        <begin position="548"/>
        <end position="576"/>
    </location>
</feature>
<feature type="compositionally biased region" description="Acidic residues" evidence="5">
    <location>
        <begin position="552"/>
        <end position="561"/>
    </location>
</feature>
<feature type="active site" description="Proton acceptor" evidence="2">
    <location>
        <position position="227"/>
    </location>
</feature>
<feature type="binding site" evidence="2">
    <location>
        <position position="181"/>
    </location>
    <ligand>
        <name>Zn(2+)</name>
        <dbReference type="ChEBI" id="CHEBI:29105"/>
        <label>1</label>
        <note>catalytic</note>
    </ligand>
</feature>
<feature type="binding site" evidence="2">
    <location>
        <position position="193"/>
    </location>
    <ligand>
        <name>Zn(2+)</name>
        <dbReference type="ChEBI" id="CHEBI:29105"/>
        <label>1</label>
        <note>catalytic</note>
    </ligand>
</feature>
<feature type="binding site" evidence="2">
    <location>
        <position position="193"/>
    </location>
    <ligand>
        <name>Zn(2+)</name>
        <dbReference type="ChEBI" id="CHEBI:29105"/>
        <label>2</label>
        <note>catalytic</note>
    </ligand>
</feature>
<feature type="binding site" evidence="2">
    <location>
        <position position="228"/>
    </location>
    <ligand>
        <name>Zn(2+)</name>
        <dbReference type="ChEBI" id="CHEBI:29105"/>
        <label>2</label>
        <note>catalytic</note>
    </ligand>
</feature>
<feature type="binding site" evidence="2">
    <location>
        <position position="253"/>
    </location>
    <ligand>
        <name>Zn(2+)</name>
        <dbReference type="ChEBI" id="CHEBI:29105"/>
        <label>1</label>
        <note>catalytic</note>
    </ligand>
</feature>
<feature type="binding site" evidence="2">
    <location>
        <position position="325"/>
    </location>
    <ligand>
        <name>Zn(2+)</name>
        <dbReference type="ChEBI" id="CHEBI:29105"/>
        <label>2</label>
        <note>catalytic</note>
    </ligand>
</feature>
<feature type="site" description="Transition state stabilizer" evidence="2">
    <location>
        <position position="324"/>
    </location>
</feature>
<feature type="glycosylation site" description="N-linked (GlcNAc...) asparagine" evidence="4">
    <location>
        <position position="245"/>
    </location>
</feature>
<feature type="glycosylation site" description="N-linked (GlcNAc...) asparagine" evidence="4">
    <location>
        <position position="745"/>
    </location>
</feature>
<feature type="glycosylation site" description="N-linked (GlcNAc...) asparagine" evidence="4">
    <location>
        <position position="793"/>
    </location>
</feature>
<feature type="glycosylation site" description="N-linked (GlcNAc...) asparagine" evidence="4">
    <location>
        <position position="822"/>
    </location>
</feature>
<organism>
    <name type="scientific">Yarrowia lipolytica (strain CLIB 122 / E 150)</name>
    <name type="common">Yeast</name>
    <name type="synonym">Candida lipolytica</name>
    <dbReference type="NCBI Taxonomy" id="284591"/>
    <lineage>
        <taxon>Eukaryota</taxon>
        <taxon>Fungi</taxon>
        <taxon>Dikarya</taxon>
        <taxon>Ascomycota</taxon>
        <taxon>Saccharomycotina</taxon>
        <taxon>Dipodascomycetes</taxon>
        <taxon>Dipodascales</taxon>
        <taxon>Dipodascales incertae sedis</taxon>
        <taxon>Yarrowia</taxon>
    </lineage>
</organism>
<protein>
    <recommendedName>
        <fullName evidence="1">Vacuolar membrane protease</fullName>
        <ecNumber evidence="6">3.4.-.-</ecNumber>
    </recommendedName>
    <alternativeName>
        <fullName evidence="1">FXNA-related family protease 1</fullName>
    </alternativeName>
</protein>
<name>PFF1_YARLI</name>
<proteinExistence type="inferred from homology"/>
<accession>Q6CDE6</accession>
<dbReference type="EC" id="3.4.-.-" evidence="6"/>
<dbReference type="EMBL" id="CR382129">
    <property type="protein sequence ID" value="CAG81611.1"/>
    <property type="molecule type" value="Genomic_DNA"/>
</dbReference>
<dbReference type="RefSeq" id="XP_501316.1">
    <property type="nucleotide sequence ID" value="XM_501316.1"/>
</dbReference>
<dbReference type="SMR" id="Q6CDE6"/>
<dbReference type="FunCoup" id="Q6CDE6">
    <property type="interactions" value="6"/>
</dbReference>
<dbReference type="STRING" id="284591.Q6CDE6"/>
<dbReference type="MEROPS" id="M28.A05"/>
<dbReference type="EnsemblFungi" id="CAG81611">
    <property type="protein sequence ID" value="CAG81611"/>
    <property type="gene ID" value="YALI0_C01133g"/>
</dbReference>
<dbReference type="KEGG" id="yli:2909156"/>
<dbReference type="VEuPathDB" id="FungiDB:YALI0_C01133g"/>
<dbReference type="HOGENOM" id="CLU_006412_1_0_1"/>
<dbReference type="InParanoid" id="Q6CDE6"/>
<dbReference type="OMA" id="TPWPVTI"/>
<dbReference type="OrthoDB" id="108648at4891"/>
<dbReference type="Proteomes" id="UP000001300">
    <property type="component" value="Chromosome C"/>
</dbReference>
<dbReference type="GO" id="GO:0005774">
    <property type="term" value="C:vacuolar membrane"/>
    <property type="evidence" value="ECO:0007669"/>
    <property type="project" value="UniProtKB-SubCell"/>
</dbReference>
<dbReference type="GO" id="GO:0046872">
    <property type="term" value="F:metal ion binding"/>
    <property type="evidence" value="ECO:0007669"/>
    <property type="project" value="UniProtKB-KW"/>
</dbReference>
<dbReference type="GO" id="GO:0008235">
    <property type="term" value="F:metalloexopeptidase activity"/>
    <property type="evidence" value="ECO:0007669"/>
    <property type="project" value="InterPro"/>
</dbReference>
<dbReference type="GO" id="GO:0006508">
    <property type="term" value="P:proteolysis"/>
    <property type="evidence" value="ECO:0000318"/>
    <property type="project" value="GO_Central"/>
</dbReference>
<dbReference type="CDD" id="cd03875">
    <property type="entry name" value="M28_Fxna_like"/>
    <property type="match status" value="1"/>
</dbReference>
<dbReference type="FunFam" id="3.40.630.10:FF:000057">
    <property type="entry name" value="Vacuolar membrane protease"/>
    <property type="match status" value="1"/>
</dbReference>
<dbReference type="Gene3D" id="3.40.630.10">
    <property type="entry name" value="Zn peptidases"/>
    <property type="match status" value="1"/>
</dbReference>
<dbReference type="InterPro" id="IPR048024">
    <property type="entry name" value="Fxna-like_M28_dom"/>
</dbReference>
<dbReference type="InterPro" id="IPR045175">
    <property type="entry name" value="M28_fam"/>
</dbReference>
<dbReference type="InterPro" id="IPR007484">
    <property type="entry name" value="Peptidase_M28"/>
</dbReference>
<dbReference type="InterPro" id="IPR053975">
    <property type="entry name" value="PFF1_C"/>
</dbReference>
<dbReference type="InterPro" id="IPR053976">
    <property type="entry name" value="PFF1_TM"/>
</dbReference>
<dbReference type="PANTHER" id="PTHR12147">
    <property type="entry name" value="METALLOPEPTIDASE M28 FAMILY MEMBER"/>
    <property type="match status" value="1"/>
</dbReference>
<dbReference type="PANTHER" id="PTHR12147:SF58">
    <property type="entry name" value="VACUOLAR MEMBRANE PROTEASE"/>
    <property type="match status" value="1"/>
</dbReference>
<dbReference type="Pfam" id="PF04389">
    <property type="entry name" value="Peptidase_M28"/>
    <property type="match status" value="1"/>
</dbReference>
<dbReference type="Pfam" id="PF22250">
    <property type="entry name" value="PFF1_C"/>
    <property type="match status" value="1"/>
</dbReference>
<dbReference type="Pfam" id="PF22251">
    <property type="entry name" value="PFF1_TM"/>
    <property type="match status" value="2"/>
</dbReference>
<dbReference type="SUPFAM" id="SSF53187">
    <property type="entry name" value="Zn-dependent exopeptidases"/>
    <property type="match status" value="1"/>
</dbReference>
<gene>
    <name type="ordered locus">YALI0C01133g</name>
</gene>